<dbReference type="EC" id="5.1.3.-" evidence="2"/>
<dbReference type="EMBL" id="U00096">
    <property type="protein sequence ID" value="AAC74396.2"/>
    <property type="molecule type" value="Genomic_DNA"/>
</dbReference>
<dbReference type="EMBL" id="AP009048">
    <property type="protein sequence ID" value="BAE76399.1"/>
    <property type="molecule type" value="Genomic_DNA"/>
</dbReference>
<dbReference type="PIR" id="E64880">
    <property type="entry name" value="E64880"/>
</dbReference>
<dbReference type="RefSeq" id="NP_415830.2">
    <property type="nucleotide sequence ID" value="NC_000913.3"/>
</dbReference>
<dbReference type="RefSeq" id="WP_000690229.1">
    <property type="nucleotide sequence ID" value="NZ_SSZK01000012.1"/>
</dbReference>
<dbReference type="PDB" id="6WN6">
    <property type="method" value="X-ray"/>
    <property type="resolution" value="1.86 A"/>
    <property type="chains" value="A/B/C/D=1-262"/>
</dbReference>
<dbReference type="PDBsum" id="6WN6"/>
<dbReference type="SMR" id="P76044"/>
<dbReference type="BioGRID" id="4263192">
    <property type="interactions" value="22"/>
</dbReference>
<dbReference type="FunCoup" id="P76044">
    <property type="interactions" value="22"/>
</dbReference>
<dbReference type="STRING" id="511145.b1314"/>
<dbReference type="PaxDb" id="511145-b1314"/>
<dbReference type="DNASU" id="947427"/>
<dbReference type="EnsemblBacteria" id="AAC74396">
    <property type="protein sequence ID" value="AAC74396"/>
    <property type="gene ID" value="b1314"/>
</dbReference>
<dbReference type="GeneID" id="947427"/>
<dbReference type="KEGG" id="ecj:JW5202"/>
<dbReference type="KEGG" id="eco:b1314"/>
<dbReference type="KEGG" id="ecoc:C3026_07700"/>
<dbReference type="PATRIC" id="fig|1411691.4.peg.965"/>
<dbReference type="EchoBASE" id="EB3674"/>
<dbReference type="eggNOG" id="COG1082">
    <property type="taxonomic scope" value="Bacteria"/>
</dbReference>
<dbReference type="HOGENOM" id="CLU_050006_9_0_6"/>
<dbReference type="InParanoid" id="P76044"/>
<dbReference type="OMA" id="MKLSCQE"/>
<dbReference type="OrthoDB" id="9786584at2"/>
<dbReference type="PhylomeDB" id="P76044"/>
<dbReference type="BioCyc" id="EcoCyc:G6652-MONOMER"/>
<dbReference type="BioCyc" id="MetaCyc:G6652-MONOMER"/>
<dbReference type="PRO" id="PR:P76044"/>
<dbReference type="Proteomes" id="UP000000625">
    <property type="component" value="Chromosome"/>
</dbReference>
<dbReference type="GO" id="GO:0005829">
    <property type="term" value="C:cytosol"/>
    <property type="evidence" value="ECO:0000314"/>
    <property type="project" value="EcoCyc"/>
</dbReference>
<dbReference type="GO" id="GO:0042802">
    <property type="term" value="F:identical protein binding"/>
    <property type="evidence" value="ECO:0000314"/>
    <property type="project" value="EcoCyc"/>
</dbReference>
<dbReference type="GO" id="GO:0030145">
    <property type="term" value="F:manganese ion binding"/>
    <property type="evidence" value="ECO:0000314"/>
    <property type="project" value="EcoCyc"/>
</dbReference>
<dbReference type="GO" id="GO:0016857">
    <property type="term" value="F:racemase and epimerase activity, acting on carbohydrates and derivatives"/>
    <property type="evidence" value="ECO:0000314"/>
    <property type="project" value="EcoCyc"/>
</dbReference>
<dbReference type="FunFam" id="3.20.20.150:FF:000014">
    <property type="entry name" value="Putative sugar phosphate isomerase/epimerase"/>
    <property type="match status" value="1"/>
</dbReference>
<dbReference type="Gene3D" id="3.20.20.150">
    <property type="entry name" value="Divalent-metal-dependent TIM barrel enzymes"/>
    <property type="match status" value="1"/>
</dbReference>
<dbReference type="InterPro" id="IPR050417">
    <property type="entry name" value="Sugar_Epim/Isomerase"/>
</dbReference>
<dbReference type="InterPro" id="IPR036237">
    <property type="entry name" value="Xyl_isomerase-like_sf"/>
</dbReference>
<dbReference type="InterPro" id="IPR013022">
    <property type="entry name" value="Xyl_isomerase-like_TIM-brl"/>
</dbReference>
<dbReference type="PANTHER" id="PTHR43489:SF7">
    <property type="entry name" value="3-DEHYDRO-D-GULOSIDE 4-EPIMERASE-RELATED"/>
    <property type="match status" value="1"/>
</dbReference>
<dbReference type="PANTHER" id="PTHR43489">
    <property type="entry name" value="ISOMERASE"/>
    <property type="match status" value="1"/>
</dbReference>
<dbReference type="Pfam" id="PF01261">
    <property type="entry name" value="AP_endonuc_2"/>
    <property type="match status" value="1"/>
</dbReference>
<dbReference type="SUPFAM" id="SSF51658">
    <property type="entry name" value="Xylose isomerase-like"/>
    <property type="match status" value="1"/>
</dbReference>
<accession>P76044</accession>
<accession>Q2MBF7</accession>
<keyword id="KW-0002">3D-structure</keyword>
<keyword id="KW-0119">Carbohydrate metabolism</keyword>
<keyword id="KW-0413">Isomerase</keyword>
<keyword id="KW-0464">Manganese</keyword>
<keyword id="KW-0479">Metal-binding</keyword>
<keyword id="KW-1185">Reference proteome</keyword>
<name>YCJR_ECOLI</name>
<reference key="1">
    <citation type="journal article" date="1997" name="Science">
        <title>The complete genome sequence of Escherichia coli K-12.</title>
        <authorList>
            <person name="Blattner F.R."/>
            <person name="Plunkett G. III"/>
            <person name="Bloch C.A."/>
            <person name="Perna N.T."/>
            <person name="Burland V."/>
            <person name="Riley M."/>
            <person name="Collado-Vides J."/>
            <person name="Glasner J.D."/>
            <person name="Rode C.K."/>
            <person name="Mayhew G.F."/>
            <person name="Gregor J."/>
            <person name="Davis N.W."/>
            <person name="Kirkpatrick H.A."/>
            <person name="Goeden M.A."/>
            <person name="Rose D.J."/>
            <person name="Mau B."/>
            <person name="Shao Y."/>
        </authorList>
    </citation>
    <scope>NUCLEOTIDE SEQUENCE [LARGE SCALE GENOMIC DNA]</scope>
    <source>
        <strain>K12 / MG1655 / ATCC 47076</strain>
    </source>
</reference>
<reference key="2">
    <citation type="journal article" date="2006" name="Mol. Syst. Biol.">
        <title>Highly accurate genome sequences of Escherichia coli K-12 strains MG1655 and W3110.</title>
        <authorList>
            <person name="Hayashi K."/>
            <person name="Morooka N."/>
            <person name="Yamamoto Y."/>
            <person name="Fujita K."/>
            <person name="Isono K."/>
            <person name="Choi S."/>
            <person name="Ohtsubo E."/>
            <person name="Baba T."/>
            <person name="Wanner B.L."/>
            <person name="Mori H."/>
            <person name="Horiuchi T."/>
        </authorList>
    </citation>
    <scope>NUCLEOTIDE SEQUENCE [LARGE SCALE GENOMIC DNA]</scope>
    <source>
        <strain>K12 / W3110 / ATCC 27325 / DSM 5911</strain>
    </source>
</reference>
<reference key="3">
    <citation type="journal article" date="2019" name="Biochemistry">
        <title>Functional Characterization of the ycjQRS Gene Cluster from Escherichia coli: A Novel Pathway for the Transformation of D-Gulosides to D-Glucosides.</title>
        <authorList>
            <person name="Mukherjee K."/>
            <person name="Huddleston J.P."/>
            <person name="Narindoshvili T."/>
            <person name="Nemmara V.V."/>
            <person name="Raushel F.M."/>
        </authorList>
    </citation>
    <scope>FUNCTION</scope>
    <scope>CATALYTIC ACTIVITY</scope>
    <scope>COFACTOR</scope>
    <scope>SUBSTRATE SPECIFICITY</scope>
    <scope>BIOPHYSICOCHEMICAL PROPERTIES</scope>
    <source>
        <strain>K12</strain>
    </source>
</reference>
<protein>
    <recommendedName>
        <fullName evidence="4">3-dehydro-D-guloside 4-epimerase</fullName>
        <ecNumber evidence="2">5.1.3.-</ecNumber>
    </recommendedName>
    <alternativeName>
        <fullName evidence="4">3-keto-D-guloside 4-epimerase</fullName>
    </alternativeName>
</protein>
<sequence length="262" mass="29832">MKIGTQNQAFFPENILEKFRYIKEMGFDGFEIDGKLLVNNIEEVKAAIKETGLPVTTACGGYDGWIGDFIEERRLNGLKQIERILEALAEVGGKGIVVPAAWGMFTFRLPPMTSPRSLDGDRKMVSDSLRVLEQVAARTGTVVYLEPLNRYQDHMINTLADARRYIVENDLKHVQIIGDFYHMNIEEDNLAQALHDNRDLLGHVHIADNHRYQPGSGTLDFHALFEQLRADNYQGYVVYEGRIRAEDPAQAYRDSLAWLRTC</sequence>
<evidence type="ECO:0000250" key="1">
    <source>
        <dbReference type="UniProtKB" id="Q9WYP7"/>
    </source>
</evidence>
<evidence type="ECO:0000269" key="2">
    <source>
    </source>
</evidence>
<evidence type="ECO:0000305" key="3"/>
<evidence type="ECO:0000305" key="4">
    <source>
    </source>
</evidence>
<evidence type="ECO:0007829" key="5">
    <source>
        <dbReference type="PDB" id="6WN6"/>
    </source>
</evidence>
<gene>
    <name type="primary">ycjR</name>
    <name type="ordered locus">b1314</name>
    <name type="ordered locus">JW5202</name>
</gene>
<comment type="function">
    <text evidence="2">Catalyzes the epimerization at C4 of 3-dehydro-D-gulosides leading to 3-dehydro-D-glucosides. Probably functions in a metabolic pathway that transforms D-gulosides to D-glucosides. Can use methyl alpha-3-dehydro-D-glucoside and methyl beta-3-dehydro-D-glucoside as substrates in vitro. However, the actual specific physiological substrates for this metabolic pathway are unknown. Cannot act on D-psicose, D-fructose, D-tagatose, D-sorbose, L-xylulose, or L-ribulose.</text>
</comment>
<comment type="catalytic activity">
    <reaction evidence="2">
        <text>a 3-dehydro-D-guloside = a 3-dehydro-D-glucoside</text>
        <dbReference type="Rhea" id="RHEA:61728"/>
        <dbReference type="ChEBI" id="CHEBI:145016"/>
        <dbReference type="ChEBI" id="CHEBI:145017"/>
    </reaction>
</comment>
<comment type="cofactor">
    <cofactor evidence="2">
        <name>Mn(2+)</name>
        <dbReference type="ChEBI" id="CHEBI:29035"/>
    </cofactor>
    <text evidence="2">Binds 1 Mn(2+) ion per subunit.</text>
</comment>
<comment type="biophysicochemical properties">
    <kinetics>
        <KM evidence="2">37 mM for methyl alpha-3-dehydro-D-glucoside (at pH 8.0 and 30 degrees Celsius)</KM>
        <KM evidence="2">34.5 mM for methyl beta-3-dehydro-D-glucoside (at pH 7.0 and 30 degrees Celsius)</KM>
        <KM evidence="2">31 mM for methyl beta-3-dehydro-D-glucoside (at pH 8.0 and 30 degrees Celsius)</KM>
        <text evidence="2">kcat is 19.2 sec(-1) for the epimerization of methyl alpha-3-dehydro-D-glucoside (at pH 8.0 and 30 degrees Celsius). kcat is 2.2 sec(-1) for the epimerization of methyl beta-3-dehydro-D-glucoside (at pH 7.0 and 30 degrees Celsius). kcat is 4.0 sec(-1) for the epimerization of methyl beta-3-dehydro-D-glucoside (at pH 8.0 and 30 degrees Celsius).</text>
    </kinetics>
</comment>
<comment type="similarity">
    <text evidence="3">Belongs to the hyi family.</text>
</comment>
<organism>
    <name type="scientific">Escherichia coli (strain K12)</name>
    <dbReference type="NCBI Taxonomy" id="83333"/>
    <lineage>
        <taxon>Bacteria</taxon>
        <taxon>Pseudomonadati</taxon>
        <taxon>Pseudomonadota</taxon>
        <taxon>Gammaproteobacteria</taxon>
        <taxon>Enterobacterales</taxon>
        <taxon>Enterobacteriaceae</taxon>
        <taxon>Escherichia</taxon>
    </lineage>
</organism>
<feature type="chain" id="PRO_0000209108" description="3-dehydro-D-guloside 4-epimerase">
    <location>
        <begin position="1"/>
        <end position="262"/>
    </location>
</feature>
<feature type="active site" description="Proton donor/acceptor" evidence="1">
    <location>
        <position position="146"/>
    </location>
</feature>
<feature type="active site" description="Proton donor/acceptor" evidence="1">
    <location>
        <position position="240"/>
    </location>
</feature>
<feature type="binding site" evidence="1">
    <location>
        <position position="146"/>
    </location>
    <ligand>
        <name>Mn(2+)</name>
        <dbReference type="ChEBI" id="CHEBI:29035"/>
    </ligand>
</feature>
<feature type="binding site" evidence="1">
    <location>
        <position position="179"/>
    </location>
    <ligand>
        <name>Mn(2+)</name>
        <dbReference type="ChEBI" id="CHEBI:29035"/>
    </ligand>
</feature>
<feature type="binding site" evidence="1">
    <location>
        <position position="182"/>
    </location>
    <ligand>
        <name>substrate</name>
    </ligand>
</feature>
<feature type="binding site" evidence="1">
    <location>
        <position position="205"/>
    </location>
    <ligand>
        <name>Mn(2+)</name>
        <dbReference type="ChEBI" id="CHEBI:29035"/>
    </ligand>
</feature>
<feature type="binding site" evidence="1">
    <location>
        <position position="211"/>
    </location>
    <ligand>
        <name>substrate</name>
    </ligand>
</feature>
<feature type="binding site" evidence="1">
    <location>
        <position position="240"/>
    </location>
    <ligand>
        <name>Mn(2+)</name>
        <dbReference type="ChEBI" id="CHEBI:29035"/>
    </ligand>
</feature>
<feature type="strand" evidence="5">
    <location>
        <begin position="2"/>
        <end position="6"/>
    </location>
</feature>
<feature type="helix" evidence="5">
    <location>
        <begin position="15"/>
        <end position="25"/>
    </location>
</feature>
<feature type="strand" evidence="5">
    <location>
        <begin position="28"/>
        <end position="33"/>
    </location>
</feature>
<feature type="helix" evidence="5">
    <location>
        <begin position="34"/>
        <end position="39"/>
    </location>
</feature>
<feature type="helix" evidence="5">
    <location>
        <begin position="41"/>
        <end position="51"/>
    </location>
</feature>
<feature type="strand" evidence="5">
    <location>
        <begin position="55"/>
        <end position="59"/>
    </location>
</feature>
<feature type="helix" evidence="5">
    <location>
        <begin position="71"/>
        <end position="91"/>
    </location>
</feature>
<feature type="strand" evidence="5">
    <location>
        <begin position="95"/>
        <end position="100"/>
    </location>
</feature>
<feature type="strand" evidence="5">
    <location>
        <begin position="102"/>
        <end position="104"/>
    </location>
</feature>
<feature type="strand" evidence="5">
    <location>
        <begin position="109"/>
        <end position="111"/>
    </location>
</feature>
<feature type="helix" evidence="5">
    <location>
        <begin position="118"/>
        <end position="139"/>
    </location>
</feature>
<feature type="strand" evidence="5">
    <location>
        <begin position="142"/>
        <end position="146"/>
    </location>
</feature>
<feature type="turn" evidence="5">
    <location>
        <begin position="150"/>
        <end position="152"/>
    </location>
</feature>
<feature type="helix" evidence="5">
    <location>
        <begin position="159"/>
        <end position="168"/>
    </location>
</feature>
<feature type="strand" evidence="5">
    <location>
        <begin position="172"/>
        <end position="179"/>
    </location>
</feature>
<feature type="helix" evidence="5">
    <location>
        <begin position="180"/>
        <end position="186"/>
    </location>
</feature>
<feature type="helix" evidence="5">
    <location>
        <begin position="190"/>
        <end position="196"/>
    </location>
</feature>
<feature type="turn" evidence="5">
    <location>
        <begin position="197"/>
        <end position="200"/>
    </location>
</feature>
<feature type="strand" evidence="5">
    <location>
        <begin position="201"/>
        <end position="206"/>
    </location>
</feature>
<feature type="strand" evidence="5">
    <location>
        <begin position="211"/>
        <end position="213"/>
    </location>
</feature>
<feature type="helix" evidence="5">
    <location>
        <begin position="221"/>
        <end position="230"/>
    </location>
</feature>
<feature type="strand" evidence="5">
    <location>
        <begin position="235"/>
        <end position="239"/>
    </location>
</feature>
<feature type="strand" evidence="5">
    <location>
        <begin position="245"/>
        <end position="247"/>
    </location>
</feature>
<feature type="helix" evidence="5">
    <location>
        <begin position="248"/>
        <end position="259"/>
    </location>
</feature>
<proteinExistence type="evidence at protein level"/>